<proteinExistence type="inferred from homology"/>
<organism>
    <name type="scientific">Human immunodeficiency virus type 1 group M subtype B (isolate SF33)</name>
    <name type="common">HIV-1</name>
    <dbReference type="NCBI Taxonomy" id="11690"/>
    <lineage>
        <taxon>Viruses</taxon>
        <taxon>Riboviria</taxon>
        <taxon>Pararnavirae</taxon>
        <taxon>Artverviricota</taxon>
        <taxon>Revtraviricetes</taxon>
        <taxon>Ortervirales</taxon>
        <taxon>Retroviridae</taxon>
        <taxon>Orthoretrovirinae</taxon>
        <taxon>Lentivirus</taxon>
        <taxon>Human immunodeficiency virus type 1</taxon>
    </lineage>
</organism>
<protein>
    <recommendedName>
        <fullName evidence="1">Protein Rev</fullName>
    </recommendedName>
    <alternativeName>
        <fullName evidence="1">ART/TRS</fullName>
    </alternativeName>
    <alternativeName>
        <fullName evidence="1">Anti-repression transactivator</fullName>
    </alternativeName>
    <alternativeName>
        <fullName evidence="1">Regulator of expression of viral proteins</fullName>
    </alternativeName>
</protein>
<keyword id="KW-0014">AIDS</keyword>
<keyword id="KW-1035">Host cytoplasm</keyword>
<keyword id="KW-1048">Host nucleus</keyword>
<keyword id="KW-0945">Host-virus interaction</keyword>
<keyword id="KW-0488">Methylation</keyword>
<keyword id="KW-0509">mRNA transport</keyword>
<keyword id="KW-0597">Phosphoprotein</keyword>
<keyword id="KW-0694">RNA-binding</keyword>
<keyword id="KW-0813">Transport</keyword>
<name>REV_HV1S3</name>
<gene>
    <name evidence="1" type="primary">rev</name>
</gene>
<dbReference type="EMBL" id="AY352275">
    <property type="protein sequence ID" value="AAQ17030.1"/>
    <property type="molecule type" value="Genomic_DNA"/>
</dbReference>
<dbReference type="Proteomes" id="UP000118752">
    <property type="component" value="Genome"/>
</dbReference>
<dbReference type="GO" id="GO:0030430">
    <property type="term" value="C:host cell cytoplasm"/>
    <property type="evidence" value="ECO:0007669"/>
    <property type="project" value="UniProtKB-SubCell"/>
</dbReference>
<dbReference type="GO" id="GO:0044196">
    <property type="term" value="C:host cell nucleolus"/>
    <property type="evidence" value="ECO:0007669"/>
    <property type="project" value="UniProtKB-SubCell"/>
</dbReference>
<dbReference type="GO" id="GO:0003700">
    <property type="term" value="F:DNA-binding transcription factor activity"/>
    <property type="evidence" value="ECO:0007669"/>
    <property type="project" value="UniProtKB-UniRule"/>
</dbReference>
<dbReference type="GO" id="GO:0003723">
    <property type="term" value="F:RNA binding"/>
    <property type="evidence" value="ECO:0007669"/>
    <property type="project" value="UniProtKB-UniRule"/>
</dbReference>
<dbReference type="GO" id="GO:0051028">
    <property type="term" value="P:mRNA transport"/>
    <property type="evidence" value="ECO:0007669"/>
    <property type="project" value="UniProtKB-UniRule"/>
</dbReference>
<dbReference type="GO" id="GO:0016032">
    <property type="term" value="P:viral process"/>
    <property type="evidence" value="ECO:0007669"/>
    <property type="project" value="UniProtKB-UniRule"/>
</dbReference>
<dbReference type="Gene3D" id="6.10.140.630">
    <property type="match status" value="1"/>
</dbReference>
<dbReference type="HAMAP" id="MF_04077">
    <property type="entry name" value="REV_HIV1"/>
    <property type="match status" value="1"/>
</dbReference>
<dbReference type="InterPro" id="IPR000625">
    <property type="entry name" value="REV_protein"/>
</dbReference>
<dbReference type="Pfam" id="PF00424">
    <property type="entry name" value="REV"/>
    <property type="match status" value="1"/>
</dbReference>
<comment type="function">
    <text evidence="1">Escorts unspliced or incompletely spliced viral pre-mRNAs (late transcripts) out of the nucleus of infected cells. These pre-mRNAs carry a recognition sequence called Rev responsive element (RRE) located in the env gene, that is not present in fully spliced viral mRNAs (early transcripts). This function is essential since most viral proteins are translated from unspliced or partially spliced pre-mRNAs which cannot exit the nucleus by the pathway used by fully processed cellular mRNAs. Rev itself is translated from a fully spliced mRNA that readily exits the nucleus. Rev's nuclear localization signal (NLS) binds directly to KPNB1/Importin beta-1 without previous binding to KPNA1/Importin alpha-1. KPNB1 binds to the GDP bound form of RAN (Ran-GDP) and targets Rev to the nucleus. In the nucleus, the conversion from Ran-GDP to Ran-GTP dissociates Rev from KPNB1 and allows Rev's binding to the RRE in viral pre-mRNAs. Rev multimerization on the RRE via cooperative assembly exposes its nuclear export signal (NES) to the surface. Rev can then form a complex with XPO1/CRM1 and Ran-GTP, leading to nuclear export of the complex. Conversion from Ran-GTP to Ran-GDP mediates dissociation of the Rev/RRE/XPO1/RAN complex, so that Rev can return to the nucleus for a subsequent round of export. Beside KPNB1, also seems to interact with TNPO1/Transportin-1, RANBP5/IPO5 and IPO7/RANBP7 for nuclear import. The nucleoporin-like HRB/RIP is an essential cofactor that probably indirectly interacts with Rev to release HIV RNAs from the perinuclear region to the cytoplasm.</text>
</comment>
<comment type="subunit">
    <text evidence="1">Homomultimer; when bound to the RRE. Multimeric assembly is essential for activity and may involve XPO1. Binds to human KPNB1, XPO1, TNPO1, RANBP5 and IPO7. Interacts with the viral Integrase. Interacts with human KHDRBS1. Interacts with human NAP1; this interaction decreases Rev multimerization and stimulates its activity. Interacts with human DEAD-box helicases DDX3 and DDX24; these interactions may serve for viral RNA export to the cytoplasm and packaging, respectively. Interacts with human PSIP1; this interaction may inhibit HIV-1 DNA integration by promoting dissociation of the Integrase-LEDGF/p75 complex.</text>
</comment>
<comment type="subcellular location">
    <subcellularLocation>
        <location evidence="1">Host nucleus</location>
        <location evidence="1">Host nucleolus</location>
    </subcellularLocation>
    <subcellularLocation>
        <location evidence="1">Host cytoplasm</location>
    </subcellularLocation>
    <text evidence="1">The presence of both nuclear import and nuclear export signals leads to continuous shuttling between the nucleus and cytoplasm.</text>
</comment>
<comment type="domain">
    <text evidence="1">The RNA-binding motif binds to the RRE, a 240 bp stem-and-loop structure present in incompletely spliced viral pre-mRNAs. This region also contains the NLS which mediates nuclear localization via KPNB1 binding and, when the N-terminal sequence is present, nucleolar targeting. These overlapping functions prevent Rev bound to RRE from undesirable return to the nucleus. When Rev binds the RRE, the NLS becomes masked while the NES remains accessible. The leucine-rich NES mediates binding to human XPO1.</text>
</comment>
<comment type="PTM">
    <text evidence="1">Asymmetrically arginine dimethylated at one site by host PRMT6. Methylation impairs the RNA-binding activity and export of viral RNA from the nucleus to the cytoplasm.</text>
</comment>
<comment type="PTM">
    <text evidence="1">Phosphorylated by protein kinase CK2. Presence of, and maybe binding to the N-terminus of the regulatory beta subunit of CK2 is necessary for CK2-mediated Rev's phosphorylation.</text>
</comment>
<comment type="miscellaneous">
    <text evidence="1">HIV-1 lineages are divided in three main groups, M (for Major), O (for Outlier), and N (for New, or Non-M, Non-O). The vast majority of strains found worldwide belong to the group M. Group O seems to be endemic to and largely confined to Cameroon and neighboring countries in West Central Africa, where these viruses represent a small minority of HIV-1 strains. The group N is represented by a limited number of isolates from Cameroonian persons. The group M is further subdivided in 9 clades or subtypes (A to D, F to H, J and K).</text>
</comment>
<comment type="similarity">
    <text evidence="1">Belongs to the HIV-1 REV protein family.</text>
</comment>
<organismHost>
    <name type="scientific">Homo sapiens</name>
    <name type="common">Human</name>
    <dbReference type="NCBI Taxonomy" id="9606"/>
</organismHost>
<reference key="1">
    <citation type="journal article" date="1990" name="J. Virol.">
        <title>Human immunodeficiency virus type 1 cellular host range, replication, and cytopathicity are linked to the envelope region of the viral genome.</title>
        <authorList>
            <person name="York-Higgins D."/>
            <person name="Cheng-Mayer C."/>
            <person name="Bauer D."/>
            <person name="Levy J.A."/>
            <person name="Dina D."/>
        </authorList>
    </citation>
    <scope>NUCLEOTIDE SEQUENCE [GENOMIC DNA]</scope>
</reference>
<reference key="2">
    <citation type="journal article" date="1999" name="Arch. Biochem. Biophys.">
        <title>The ins and outs of HIV Rev.</title>
        <authorList>
            <person name="Hope T.J."/>
        </authorList>
    </citation>
    <scope>REVIEW</scope>
</reference>
<sequence>MAGRSGGSDRELLTAVRIIKILYQSNPHPSPEGTRQARRNRRRRWRERQRQIHSISERILSTVLGRSSEPVPLQLPPLDRLTLDCSEDCGTSGTQGVGSPQILVESPAVLESGTKE</sequence>
<feature type="chain" id="PRO_0000085265" description="Protein Rev">
    <location>
        <begin position="1"/>
        <end position="116"/>
    </location>
</feature>
<feature type="region of interest" description="Homomultimerization" evidence="1">
    <location>
        <begin position="18"/>
        <end position="26"/>
    </location>
</feature>
<feature type="region of interest" description="Disordered" evidence="2">
    <location>
        <begin position="24"/>
        <end position="49"/>
    </location>
</feature>
<feature type="short sequence motif" description="Nuclear localization signal and RNA-binding (RRE)" evidence="1">
    <location>
        <begin position="34"/>
        <end position="50"/>
    </location>
</feature>
<feature type="short sequence motif" description="Nuclear export signal and binding to XPO1" evidence="1">
    <location>
        <begin position="73"/>
        <end position="84"/>
    </location>
</feature>
<feature type="compositionally biased region" description="Basic residues" evidence="2">
    <location>
        <begin position="36"/>
        <end position="47"/>
    </location>
</feature>
<feature type="modified residue" description="Phosphoserine; by host CK2" evidence="1">
    <location>
        <position position="5"/>
    </location>
</feature>
<feature type="modified residue" description="Phosphoserine; by host CK2" evidence="1">
    <location>
        <position position="8"/>
    </location>
</feature>
<feature type="modified residue" description="Phosphoserine; by host" evidence="1">
    <location>
        <position position="92"/>
    </location>
</feature>
<feature type="modified residue" description="Phosphoserine; by host" evidence="1">
    <location>
        <position position="99"/>
    </location>
</feature>
<accession>P19547</accession>
<evidence type="ECO:0000255" key="1">
    <source>
        <dbReference type="HAMAP-Rule" id="MF_04077"/>
    </source>
</evidence>
<evidence type="ECO:0000256" key="2">
    <source>
        <dbReference type="SAM" id="MobiDB-lite"/>
    </source>
</evidence>